<gene>
    <name evidence="1" type="primary">rplD</name>
    <name type="ordered locus">BceJ2315_02380</name>
    <name type="ORF">BCAL0235</name>
</gene>
<organism>
    <name type="scientific">Burkholderia cenocepacia (strain ATCC BAA-245 / DSM 16553 / LMG 16656 / NCTC 13227 / J2315 / CF5610)</name>
    <name type="common">Burkholderia cepacia (strain J2315)</name>
    <dbReference type="NCBI Taxonomy" id="216591"/>
    <lineage>
        <taxon>Bacteria</taxon>
        <taxon>Pseudomonadati</taxon>
        <taxon>Pseudomonadota</taxon>
        <taxon>Betaproteobacteria</taxon>
        <taxon>Burkholderiales</taxon>
        <taxon>Burkholderiaceae</taxon>
        <taxon>Burkholderia</taxon>
        <taxon>Burkholderia cepacia complex</taxon>
    </lineage>
</organism>
<evidence type="ECO:0000255" key="1">
    <source>
        <dbReference type="HAMAP-Rule" id="MF_01328"/>
    </source>
</evidence>
<evidence type="ECO:0000256" key="2">
    <source>
        <dbReference type="SAM" id="MobiDB-lite"/>
    </source>
</evidence>
<evidence type="ECO:0000305" key="3"/>
<keyword id="KW-0687">Ribonucleoprotein</keyword>
<keyword id="KW-0689">Ribosomal protein</keyword>
<keyword id="KW-0694">RNA-binding</keyword>
<keyword id="KW-0699">rRNA-binding</keyword>
<proteinExistence type="inferred from homology"/>
<protein>
    <recommendedName>
        <fullName evidence="1">Large ribosomal subunit protein uL4</fullName>
    </recommendedName>
    <alternativeName>
        <fullName evidence="3">50S ribosomal protein L4</fullName>
    </alternativeName>
</protein>
<sequence>MELKLLNENGQEGAVVNASDVVFGRDYNEALIHQVVIAYQANARQGNRAQKDREQVKHTTKKPWRQKGTGRARAGMSSSPLWRGGGRIFPNSPEENFSHKVNKKMHRAGLCSIFSQLAREGRLSVVEDIILEAPKTKLLADKFKTMGLDSVLIITDTVDENLYLASRNLPHVAIVEPRYADPLSLIYFKKVLVTKAAVAQIEELLS</sequence>
<accession>B4E5C1</accession>
<reference key="1">
    <citation type="journal article" date="2009" name="J. Bacteriol.">
        <title>The genome of Burkholderia cenocepacia J2315, an epidemic pathogen of cystic fibrosis patients.</title>
        <authorList>
            <person name="Holden M.T."/>
            <person name="Seth-Smith H.M."/>
            <person name="Crossman L.C."/>
            <person name="Sebaihia M."/>
            <person name="Bentley S.D."/>
            <person name="Cerdeno-Tarraga A.M."/>
            <person name="Thomson N.R."/>
            <person name="Bason N."/>
            <person name="Quail M.A."/>
            <person name="Sharp S."/>
            <person name="Cherevach I."/>
            <person name="Churcher C."/>
            <person name="Goodhead I."/>
            <person name="Hauser H."/>
            <person name="Holroyd N."/>
            <person name="Mungall K."/>
            <person name="Scott P."/>
            <person name="Walker D."/>
            <person name="White B."/>
            <person name="Rose H."/>
            <person name="Iversen P."/>
            <person name="Mil-Homens D."/>
            <person name="Rocha E.P."/>
            <person name="Fialho A.M."/>
            <person name="Baldwin A."/>
            <person name="Dowson C."/>
            <person name="Barrell B.G."/>
            <person name="Govan J.R."/>
            <person name="Vandamme P."/>
            <person name="Hart C.A."/>
            <person name="Mahenthiralingam E."/>
            <person name="Parkhill J."/>
        </authorList>
    </citation>
    <scope>NUCLEOTIDE SEQUENCE [LARGE SCALE GENOMIC DNA]</scope>
    <source>
        <strain>ATCC BAA-245 / DSM 16553 / LMG 16656 / NCTC 13227 / J2315 / CF5610</strain>
    </source>
</reference>
<comment type="function">
    <text evidence="1">One of the primary rRNA binding proteins, this protein initially binds near the 5'-end of the 23S rRNA. It is important during the early stages of 50S assembly. It makes multiple contacts with different domains of the 23S rRNA in the assembled 50S subunit and ribosome.</text>
</comment>
<comment type="function">
    <text evidence="1">Forms part of the polypeptide exit tunnel.</text>
</comment>
<comment type="subunit">
    <text evidence="1">Part of the 50S ribosomal subunit.</text>
</comment>
<comment type="similarity">
    <text evidence="1">Belongs to the universal ribosomal protein uL4 family.</text>
</comment>
<dbReference type="EMBL" id="AM747720">
    <property type="protein sequence ID" value="CAR50546.1"/>
    <property type="molecule type" value="Genomic_DNA"/>
</dbReference>
<dbReference type="RefSeq" id="WP_006482894.1">
    <property type="nucleotide sequence ID" value="NC_011000.1"/>
</dbReference>
<dbReference type="SMR" id="B4E5C1"/>
<dbReference type="KEGG" id="bcj:BCAL0235"/>
<dbReference type="eggNOG" id="COG0088">
    <property type="taxonomic scope" value="Bacteria"/>
</dbReference>
<dbReference type="HOGENOM" id="CLU_041575_5_2_4"/>
<dbReference type="Proteomes" id="UP000001035">
    <property type="component" value="Chromosome 1"/>
</dbReference>
<dbReference type="GO" id="GO:1990904">
    <property type="term" value="C:ribonucleoprotein complex"/>
    <property type="evidence" value="ECO:0007669"/>
    <property type="project" value="UniProtKB-KW"/>
</dbReference>
<dbReference type="GO" id="GO:0005840">
    <property type="term" value="C:ribosome"/>
    <property type="evidence" value="ECO:0007669"/>
    <property type="project" value="UniProtKB-KW"/>
</dbReference>
<dbReference type="GO" id="GO:0019843">
    <property type="term" value="F:rRNA binding"/>
    <property type="evidence" value="ECO:0007669"/>
    <property type="project" value="UniProtKB-UniRule"/>
</dbReference>
<dbReference type="GO" id="GO:0003735">
    <property type="term" value="F:structural constituent of ribosome"/>
    <property type="evidence" value="ECO:0007669"/>
    <property type="project" value="InterPro"/>
</dbReference>
<dbReference type="GO" id="GO:0006412">
    <property type="term" value="P:translation"/>
    <property type="evidence" value="ECO:0007669"/>
    <property type="project" value="UniProtKB-UniRule"/>
</dbReference>
<dbReference type="Gene3D" id="3.40.1370.10">
    <property type="match status" value="1"/>
</dbReference>
<dbReference type="HAMAP" id="MF_01328_B">
    <property type="entry name" value="Ribosomal_uL4_B"/>
    <property type="match status" value="1"/>
</dbReference>
<dbReference type="InterPro" id="IPR002136">
    <property type="entry name" value="Ribosomal_uL4"/>
</dbReference>
<dbReference type="InterPro" id="IPR013005">
    <property type="entry name" value="Ribosomal_uL4-like"/>
</dbReference>
<dbReference type="InterPro" id="IPR023574">
    <property type="entry name" value="Ribosomal_uL4_dom_sf"/>
</dbReference>
<dbReference type="NCBIfam" id="TIGR03953">
    <property type="entry name" value="rplD_bact"/>
    <property type="match status" value="1"/>
</dbReference>
<dbReference type="PANTHER" id="PTHR10746">
    <property type="entry name" value="50S RIBOSOMAL PROTEIN L4"/>
    <property type="match status" value="1"/>
</dbReference>
<dbReference type="PANTHER" id="PTHR10746:SF6">
    <property type="entry name" value="LARGE RIBOSOMAL SUBUNIT PROTEIN UL4M"/>
    <property type="match status" value="1"/>
</dbReference>
<dbReference type="Pfam" id="PF00573">
    <property type="entry name" value="Ribosomal_L4"/>
    <property type="match status" value="1"/>
</dbReference>
<dbReference type="SUPFAM" id="SSF52166">
    <property type="entry name" value="Ribosomal protein L4"/>
    <property type="match status" value="1"/>
</dbReference>
<feature type="chain" id="PRO_1000142091" description="Large ribosomal subunit protein uL4">
    <location>
        <begin position="1"/>
        <end position="206"/>
    </location>
</feature>
<feature type="region of interest" description="Disordered" evidence="2">
    <location>
        <begin position="46"/>
        <end position="78"/>
    </location>
</feature>
<feature type="compositionally biased region" description="Basic residues" evidence="2">
    <location>
        <begin position="58"/>
        <end position="70"/>
    </location>
</feature>
<name>RL4_BURCJ</name>